<comment type="function">
    <text evidence="1 2">In response to the presence of allergens, this protein directly promotes the accumulation of eosinophils (a prominent feature of allergic inflammatory reactions), but not lymphocytes, macrophages or neutrophils (By similarity). Binds to CCR3 (By similarity).</text>
</comment>
<comment type="subcellular location">
    <subcellularLocation>
        <location evidence="3">Secreted</location>
    </subcellularLocation>
</comment>
<comment type="tissue specificity">
    <text evidence="5">Lung.</text>
</comment>
<comment type="similarity">
    <text evidence="6">Belongs to the intercrine beta (chemokine CC) family.</text>
</comment>
<evidence type="ECO:0000250" key="1">
    <source>
        <dbReference type="UniProtKB" id="P48298"/>
    </source>
</evidence>
<evidence type="ECO:0000250" key="2">
    <source>
        <dbReference type="UniProtKB" id="P51671"/>
    </source>
</evidence>
<evidence type="ECO:0000250" key="3">
    <source>
        <dbReference type="UniProtKB" id="P97545"/>
    </source>
</evidence>
<evidence type="ECO:0000269" key="4">
    <source>
    </source>
</evidence>
<evidence type="ECO:0000269" key="5">
    <source>
    </source>
</evidence>
<evidence type="ECO:0000305" key="6"/>
<gene>
    <name type="primary">CCL11</name>
    <name type="synonym">SCYA11</name>
</gene>
<protein>
    <recommendedName>
        <fullName>Eotaxin</fullName>
    </recommendedName>
    <alternativeName>
        <fullName>C-C motif chemokine 11</fullName>
    </alternativeName>
    <alternativeName>
        <fullName>Eosinophil chemotactic protein</fullName>
    </alternativeName>
    <alternativeName>
        <fullName>Small-inducible cytokine A11</fullName>
    </alternativeName>
</protein>
<reference key="1">
    <citation type="journal article" date="1995" name="J. Exp. Med.">
        <title>Constitutive and allergen-induced expression of eotaxin mRNA in the guinea pig lung.</title>
        <authorList>
            <person name="Rothenberg M.E."/>
            <person name="Luster A.D."/>
            <person name="Lilly C.M."/>
            <person name="Drazen J.M."/>
            <person name="Leder P."/>
        </authorList>
    </citation>
    <scope>NUCLEOTIDE SEQUENCE [MRNA]</scope>
    <scope>TISSUE SPECIFICITY</scope>
    <source>
        <tissue>Lung</tissue>
    </source>
</reference>
<reference key="2">
    <citation type="journal article" date="1994" name="Biochem. Biophys. Res. Commun.">
        <title>Eotaxin: cloning of an eosinophil chemoattractant cytokine and increased mRNA expression in allergen-challenged guinea-pig lungs.</title>
        <authorList>
            <person name="Jose P.J."/>
            <person name="Adcock I.M."/>
            <person name="Griffiths-Johnson D.A."/>
            <person name="Berkman N."/>
            <person name="Wells T.C."/>
            <person name="Williams T.J."/>
            <person name="Power C.A."/>
        </authorList>
    </citation>
    <scope>NUCLEOTIDE SEQUENCE [MRNA]</scope>
</reference>
<reference key="3">
    <citation type="journal article" date="1994" name="J. Exp. Med.">
        <title>Eotaxin: a potent eosinophil chemoattractant cytokine detected in a guinea pig model of allergic airways inflammation.</title>
        <authorList>
            <person name="Jose P.J."/>
            <person name="Griffiths-Johnson D.A."/>
            <person name="Collins P.D."/>
            <person name="Walsh D.T."/>
            <person name="Moqbel R."/>
            <person name="Totty N.F."/>
            <person name="Truong O."/>
            <person name="Hsuan J.J."/>
            <person name="Williams T.J."/>
        </authorList>
    </citation>
    <scope>PROTEIN SEQUENCE OF 24-96</scope>
    <source>
        <strain>Hartley</strain>
        <tissue>Lung</tissue>
    </source>
</reference>
<feature type="signal peptide" evidence="4">
    <location>
        <begin position="1"/>
        <end position="23"/>
    </location>
</feature>
<feature type="chain" id="PRO_0000005193" description="Eotaxin">
    <location>
        <begin position="24"/>
        <end position="96"/>
    </location>
</feature>
<feature type="glycosylation site" description="O-linked (GalNAc...) threonine" evidence="2">
    <location>
        <position position="93"/>
    </location>
</feature>
<feature type="disulfide bond" evidence="2">
    <location>
        <begin position="31"/>
        <end position="56"/>
    </location>
</feature>
<feature type="disulfide bond" evidence="2">
    <location>
        <begin position="32"/>
        <end position="72"/>
    </location>
</feature>
<feature type="sequence conflict" description="In Ref. 2; CAA54698." evidence="6" ref="2">
    <original>D</original>
    <variation>G</variation>
    <location>
        <position position="88"/>
    </location>
</feature>
<sequence>MKVSTAFLCLLLTVSAFSAQVLAHPGIPSACCFRVTNKKISFQRLKSYKIITSSKCPQTAIVFEIKPDKMICADPKKKWVQDAKKYLDQISQTTKP</sequence>
<organism>
    <name type="scientific">Cavia porcellus</name>
    <name type="common">Guinea pig</name>
    <dbReference type="NCBI Taxonomy" id="10141"/>
    <lineage>
        <taxon>Eukaryota</taxon>
        <taxon>Metazoa</taxon>
        <taxon>Chordata</taxon>
        <taxon>Craniata</taxon>
        <taxon>Vertebrata</taxon>
        <taxon>Euteleostomi</taxon>
        <taxon>Mammalia</taxon>
        <taxon>Eutheria</taxon>
        <taxon>Euarchontoglires</taxon>
        <taxon>Glires</taxon>
        <taxon>Rodentia</taxon>
        <taxon>Hystricomorpha</taxon>
        <taxon>Caviidae</taxon>
        <taxon>Cavia</taxon>
    </lineage>
</organism>
<proteinExistence type="evidence at protein level"/>
<accession>P80325</accession>
<keyword id="KW-0145">Chemotaxis</keyword>
<keyword id="KW-0202">Cytokine</keyword>
<keyword id="KW-0903">Direct protein sequencing</keyword>
<keyword id="KW-1015">Disulfide bond</keyword>
<keyword id="KW-0325">Glycoprotein</keyword>
<keyword id="KW-0395">Inflammatory response</keyword>
<keyword id="KW-1185">Reference proteome</keyword>
<keyword id="KW-0964">Secreted</keyword>
<keyword id="KW-0732">Signal</keyword>
<name>CCL11_CAVPO</name>
<dbReference type="EMBL" id="U18941">
    <property type="protein sequence ID" value="AAC52180.1"/>
    <property type="molecule type" value="mRNA"/>
</dbReference>
<dbReference type="EMBL" id="X77603">
    <property type="protein sequence ID" value="CAA54698.1"/>
    <property type="molecule type" value="mRNA"/>
</dbReference>
<dbReference type="PIR" id="I48099">
    <property type="entry name" value="I48099"/>
</dbReference>
<dbReference type="PIR" id="JC2478">
    <property type="entry name" value="JC2478"/>
</dbReference>
<dbReference type="RefSeq" id="NP_001166295.1">
    <property type="nucleotide sequence ID" value="NM_001172824.1"/>
</dbReference>
<dbReference type="SMR" id="P80325"/>
<dbReference type="FunCoup" id="P80325">
    <property type="interactions" value="598"/>
</dbReference>
<dbReference type="STRING" id="10141.ENSCPOP00000024152"/>
<dbReference type="GlyCosmos" id="P80325">
    <property type="glycosylation" value="1 site, No reported glycans"/>
</dbReference>
<dbReference type="Ensembl" id="ENSCPOT00000043419.1">
    <property type="protein sequence ID" value="ENSCPOP00000024152.1"/>
    <property type="gene ID" value="ENSCPOG00000032138.1"/>
</dbReference>
<dbReference type="GeneID" id="100135493"/>
<dbReference type="KEGG" id="cpoc:100135493"/>
<dbReference type="CTD" id="6356"/>
<dbReference type="VEuPathDB" id="HostDB:ENSCPOG00000032138"/>
<dbReference type="eggNOG" id="ENOG502S8M4">
    <property type="taxonomic scope" value="Eukaryota"/>
</dbReference>
<dbReference type="GeneTree" id="ENSGT01130000278316"/>
<dbReference type="HOGENOM" id="CLU_141716_1_0_1"/>
<dbReference type="InParanoid" id="P80325"/>
<dbReference type="OMA" id="SKCPQTA"/>
<dbReference type="OrthoDB" id="8934837at2759"/>
<dbReference type="TreeFam" id="TF334888"/>
<dbReference type="Proteomes" id="UP000005447">
    <property type="component" value="Unassembled WGS sequence"/>
</dbReference>
<dbReference type="Bgee" id="ENSCPOG00000032138">
    <property type="expression patterns" value="Expressed in heart left ventricle and 7 other cell types or tissues"/>
</dbReference>
<dbReference type="GO" id="GO:0005615">
    <property type="term" value="C:extracellular space"/>
    <property type="evidence" value="ECO:0007669"/>
    <property type="project" value="UniProtKB-KW"/>
</dbReference>
<dbReference type="GO" id="GO:0031728">
    <property type="term" value="F:CCR3 chemokine receptor binding"/>
    <property type="evidence" value="ECO:0007669"/>
    <property type="project" value="Ensembl"/>
</dbReference>
<dbReference type="GO" id="GO:0008009">
    <property type="term" value="F:chemokine activity"/>
    <property type="evidence" value="ECO:0007669"/>
    <property type="project" value="Ensembl"/>
</dbReference>
<dbReference type="GO" id="GO:0046983">
    <property type="term" value="F:protein dimerization activity"/>
    <property type="evidence" value="ECO:0007669"/>
    <property type="project" value="Ensembl"/>
</dbReference>
<dbReference type="GO" id="GO:0061844">
    <property type="term" value="P:antimicrobial humoral immune response mediated by antimicrobial peptide"/>
    <property type="evidence" value="ECO:0007669"/>
    <property type="project" value="TreeGrafter"/>
</dbReference>
<dbReference type="GO" id="GO:0060444">
    <property type="term" value="P:branching involved in mammary gland duct morphogenesis"/>
    <property type="evidence" value="ECO:0007669"/>
    <property type="project" value="Ensembl"/>
</dbReference>
<dbReference type="GO" id="GO:0070098">
    <property type="term" value="P:chemokine-mediated signaling pathway"/>
    <property type="evidence" value="ECO:0007669"/>
    <property type="project" value="TreeGrafter"/>
</dbReference>
<dbReference type="GO" id="GO:0007010">
    <property type="term" value="P:cytoskeleton organization"/>
    <property type="evidence" value="ECO:0007669"/>
    <property type="project" value="Ensembl"/>
</dbReference>
<dbReference type="GO" id="GO:0048245">
    <property type="term" value="P:eosinophil chemotaxis"/>
    <property type="evidence" value="ECO:0007669"/>
    <property type="project" value="Ensembl"/>
</dbReference>
<dbReference type="GO" id="GO:0006954">
    <property type="term" value="P:inflammatory response"/>
    <property type="evidence" value="ECO:0007669"/>
    <property type="project" value="UniProtKB-KW"/>
</dbReference>
<dbReference type="GO" id="GO:0007611">
    <property type="term" value="P:learning or memory"/>
    <property type="evidence" value="ECO:0007669"/>
    <property type="project" value="Ensembl"/>
</dbReference>
<dbReference type="GO" id="GO:0060763">
    <property type="term" value="P:mammary duct terminal end bud growth"/>
    <property type="evidence" value="ECO:0007669"/>
    <property type="project" value="Ensembl"/>
</dbReference>
<dbReference type="GO" id="GO:0050768">
    <property type="term" value="P:negative regulation of neurogenesis"/>
    <property type="evidence" value="ECO:0007669"/>
    <property type="project" value="Ensembl"/>
</dbReference>
<dbReference type="GO" id="GO:0030838">
    <property type="term" value="P:positive regulation of actin filament polymerization"/>
    <property type="evidence" value="ECO:0007669"/>
    <property type="project" value="Ensembl"/>
</dbReference>
<dbReference type="GO" id="GO:0045766">
    <property type="term" value="P:positive regulation of angiogenesis"/>
    <property type="evidence" value="ECO:0007669"/>
    <property type="project" value="Ensembl"/>
</dbReference>
<dbReference type="GO" id="GO:0030335">
    <property type="term" value="P:positive regulation of cell migration"/>
    <property type="evidence" value="ECO:0007669"/>
    <property type="project" value="Ensembl"/>
</dbReference>
<dbReference type="GO" id="GO:0001938">
    <property type="term" value="P:positive regulation of endothelial cell proliferation"/>
    <property type="evidence" value="ECO:0007669"/>
    <property type="project" value="Ensembl"/>
</dbReference>
<dbReference type="GO" id="GO:0008360">
    <property type="term" value="P:regulation of cell shape"/>
    <property type="evidence" value="ECO:0007669"/>
    <property type="project" value="Ensembl"/>
</dbReference>
<dbReference type="CDD" id="cd00272">
    <property type="entry name" value="Chemokine_CC"/>
    <property type="match status" value="1"/>
</dbReference>
<dbReference type="FunFam" id="2.40.50.40:FF:000002">
    <property type="entry name" value="C-C motif chemokine"/>
    <property type="match status" value="1"/>
</dbReference>
<dbReference type="Gene3D" id="2.40.50.40">
    <property type="match status" value="1"/>
</dbReference>
<dbReference type="InterPro" id="IPR039809">
    <property type="entry name" value="Chemokine_b/g/d"/>
</dbReference>
<dbReference type="InterPro" id="IPR000827">
    <property type="entry name" value="Chemokine_CC_CS"/>
</dbReference>
<dbReference type="InterPro" id="IPR001811">
    <property type="entry name" value="Chemokine_IL8-like_dom"/>
</dbReference>
<dbReference type="InterPro" id="IPR036048">
    <property type="entry name" value="Interleukin_8-like_sf"/>
</dbReference>
<dbReference type="PANTHER" id="PTHR12015:SF147">
    <property type="entry name" value="C-C MOTIF CHEMOKINE 13"/>
    <property type="match status" value="1"/>
</dbReference>
<dbReference type="PANTHER" id="PTHR12015">
    <property type="entry name" value="SMALL INDUCIBLE CYTOKINE A"/>
    <property type="match status" value="1"/>
</dbReference>
<dbReference type="Pfam" id="PF00048">
    <property type="entry name" value="IL8"/>
    <property type="match status" value="1"/>
</dbReference>
<dbReference type="SMART" id="SM00199">
    <property type="entry name" value="SCY"/>
    <property type="match status" value="1"/>
</dbReference>
<dbReference type="SUPFAM" id="SSF54117">
    <property type="entry name" value="Interleukin 8-like chemokines"/>
    <property type="match status" value="1"/>
</dbReference>
<dbReference type="PROSITE" id="PS00472">
    <property type="entry name" value="SMALL_CYTOKINES_CC"/>
    <property type="match status" value="1"/>
</dbReference>